<protein>
    <recommendedName>
        <fullName>Protein C2</fullName>
    </recommendedName>
    <alternativeName>
        <fullName>Protein L2</fullName>
    </alternativeName>
</protein>
<gene>
    <name type="ORF">C2</name>
    <name type="ORF">L2</name>
</gene>
<evidence type="ECO:0000250" key="1"/>
<evidence type="ECO:0000255" key="2"/>
<evidence type="ECO:0000256" key="3">
    <source>
        <dbReference type="SAM" id="MobiDB-lite"/>
    </source>
</evidence>
<evidence type="ECO:0000305" key="4"/>
<name>C2_TPCTV</name>
<reference key="1">
    <citation type="journal article" date="1996" name="Virology">
        <title>Analysis of the nucleotide sequence of the treehopper-transmitted geminivirus, tomato pseudo-curly top virus, suggests a recombinant origin.</title>
        <authorList>
            <person name="Briddon R.W."/>
            <person name="Bedford I.D."/>
            <person name="Tsai J.H."/>
            <person name="Markham P.G."/>
        </authorList>
    </citation>
    <scope>NUCLEOTIDE SEQUENCE [GENOMIC DNA]</scope>
</reference>
<organism>
    <name type="scientific">Tomato pseudo-curly top virus</name>
    <name type="common">TPCTV</name>
    <dbReference type="NCBI Taxonomy" id="49267"/>
    <lineage>
        <taxon>Viruses</taxon>
        <taxon>Monodnaviria</taxon>
        <taxon>Shotokuvirae</taxon>
        <taxon>Cressdnaviricota</taxon>
        <taxon>Repensiviricetes</taxon>
        <taxon>Geplafuvirales</taxon>
        <taxon>Geminiviridae</taxon>
        <taxon>Topocuvirus</taxon>
    </lineage>
</organism>
<comment type="function">
    <text evidence="1">Acts as a suppressor of RNA-mediated gene silencing, also known as post-transcriptional gene silencing (PTGS), a mechanism of plant viral defense that limits the accumulation of viral RNAs. Suppresses the host RNA silencing by inhibiting adenosine kinase 2 (ADK2), a kinase involved in a general methylation pathway. Also suppresses the host basal defense by interacting with and inhibiting SNF1 kinase, a key regulator of cell metabolism implicated in innate antiviral defense. Determines pathogenicity (By similarity).</text>
</comment>
<comment type="subunit">
    <text evidence="1">Monomer. Suppress local silencing by interacting with and inactivating host adenosine kinase 2 (ADK2) in the cytoplasm. Interacts with and inhibits host SNF1 kinase (By similarity).</text>
</comment>
<comment type="subcellular location">
    <subcellularLocation>
        <location evidence="1">Host cytoplasm</location>
    </subcellularLocation>
</comment>
<comment type="domain">
    <text evidence="1">The zinc finger is involved in PTGS suppression.</text>
</comment>
<comment type="similarity">
    <text evidence="4">Belongs to the geminiviridae transcriptional activator protein family.</text>
</comment>
<keyword id="KW-1035">Host cytoplasm</keyword>
<keyword id="KW-0945">Host-virus interaction</keyword>
<keyword id="KW-1090">Inhibition of host innate immune response by virus</keyword>
<keyword id="KW-0479">Metal-binding</keyword>
<keyword id="KW-1185">Reference proteome</keyword>
<keyword id="KW-0941">Suppressor of RNA silencing</keyword>
<keyword id="KW-0899">Viral immunoevasion</keyword>
<keyword id="KW-0862">Zinc</keyword>
<keyword id="KW-0863">Zinc-finger</keyword>
<organismHost>
    <name type="scientific">Solanum lycopersicum</name>
    <name type="common">Tomato</name>
    <name type="synonym">Lycopersicon esculentum</name>
    <dbReference type="NCBI Taxonomy" id="4081"/>
</organismHost>
<organismHost>
    <name type="scientific">Solanum nigrum</name>
    <name type="common">Black nightshade</name>
    <dbReference type="NCBI Taxonomy" id="4112"/>
</organismHost>
<feature type="chain" id="PRO_0000323706" description="Protein C2">
    <location>
        <begin position="1"/>
        <end position="159"/>
    </location>
</feature>
<feature type="zinc finger region" evidence="1">
    <location>
        <begin position="65"/>
        <end position="81"/>
    </location>
</feature>
<feature type="region of interest" description="Disordered" evidence="3">
    <location>
        <begin position="102"/>
        <end position="139"/>
    </location>
</feature>
<feature type="short sequence motif" description="Nuclear localization signal" evidence="2">
    <location>
        <begin position="43"/>
        <end position="60"/>
    </location>
</feature>
<feature type="compositionally biased region" description="Low complexity" evidence="3">
    <location>
        <begin position="110"/>
        <end position="124"/>
    </location>
</feature>
<dbReference type="EMBL" id="X84735">
    <property type="protein sequence ID" value="CAA59224.1"/>
    <property type="molecule type" value="Genomic_DNA"/>
</dbReference>
<dbReference type="KEGG" id="vg:944405"/>
<dbReference type="OrthoDB" id="11041at10239"/>
<dbReference type="Proteomes" id="UP000007068">
    <property type="component" value="Genome"/>
</dbReference>
<dbReference type="GO" id="GO:0030430">
    <property type="term" value="C:host cell cytoplasm"/>
    <property type="evidence" value="ECO:0007669"/>
    <property type="project" value="UniProtKB-SubCell"/>
</dbReference>
<dbReference type="GO" id="GO:0019028">
    <property type="term" value="C:viral capsid"/>
    <property type="evidence" value="ECO:0007669"/>
    <property type="project" value="InterPro"/>
</dbReference>
<dbReference type="GO" id="GO:0005198">
    <property type="term" value="F:structural molecule activity"/>
    <property type="evidence" value="ECO:0007669"/>
    <property type="project" value="InterPro"/>
</dbReference>
<dbReference type="GO" id="GO:0008270">
    <property type="term" value="F:zinc ion binding"/>
    <property type="evidence" value="ECO:0007669"/>
    <property type="project" value="UniProtKB-KW"/>
</dbReference>
<dbReference type="GO" id="GO:0052170">
    <property type="term" value="P:symbiont-mediated suppression of host innate immune response"/>
    <property type="evidence" value="ECO:0007669"/>
    <property type="project" value="UniProtKB-KW"/>
</dbReference>
<dbReference type="InterPro" id="IPR000942">
    <property type="entry name" value="Gemini_AL2"/>
</dbReference>
<dbReference type="Pfam" id="PF01440">
    <property type="entry name" value="Gemini_AL2"/>
    <property type="match status" value="1"/>
</dbReference>
<accession>Q88889</accession>
<sequence length="159" mass="17950">MVLCDKGAHELGNREIRKGFCERCLYPEYFDDEEAATTTPTIKKRPPKLTWAPKKKRRKAIHLSCGCSYYGGIDCEDGFTHRGITHVHTVPDWLLLRRHQEPNLLPPPEHNNNGDGEQNNNITNQSQPQPAESVGSPDLLAELGGTFSITSSEWRSIIR</sequence>
<proteinExistence type="inferred from homology"/>